<protein>
    <recommendedName>
        <fullName evidence="1">Phosphate acyltransferase</fullName>
        <ecNumber evidence="1">2.3.1.274</ecNumber>
    </recommendedName>
    <alternativeName>
        <fullName evidence="1">Acyl-ACP phosphotransacylase</fullName>
    </alternativeName>
    <alternativeName>
        <fullName evidence="1">Acyl-[acyl-carrier-protein]--phosphate acyltransferase</fullName>
    </alternativeName>
    <alternativeName>
        <fullName evidence="1">Phosphate-acyl-ACP acyltransferase</fullName>
    </alternativeName>
</protein>
<sequence length="363" mass="38668">MRIAVDAMGGDYAPEEIIKGALLAHRYLQVGIALVGRPDALEPFLPRPLPPGITVVPAEEVVGMAEEPLAVRRKPQASINVSMQQVRAKQADAVVAAGNTGATMAAAYLNLGRLAGIDRPAIGALLPTLKGKPVLLLDVGANVDCRPRFLEQFARMGSLYCQCVLGIEKPRVGLLNIGEEPNKGNDLALATHQRLTQLPGIHFAGNAEGRDVLTGDFDVVVCDGFVGNALLKFAESVGQVITQVLREELPRGWRGKLGCWLLQPNLKQVKRRMDYVEYGGALLLGVNGICVITHGSSKAAMVYHAIRLAKEAAEQKILQRLQAEMADSHPSKVNAGENAPPLASASNPSPEALPVGSLDRVEG</sequence>
<accession>Q2JS89</accession>
<organism>
    <name type="scientific">Synechococcus sp. (strain JA-3-3Ab)</name>
    <name type="common">Cyanobacteria bacterium Yellowstone A-Prime</name>
    <dbReference type="NCBI Taxonomy" id="321327"/>
    <lineage>
        <taxon>Bacteria</taxon>
        <taxon>Bacillati</taxon>
        <taxon>Cyanobacteriota</taxon>
        <taxon>Cyanophyceae</taxon>
        <taxon>Synechococcales</taxon>
        <taxon>Synechococcaceae</taxon>
        <taxon>Synechococcus</taxon>
    </lineage>
</organism>
<keyword id="KW-0963">Cytoplasm</keyword>
<keyword id="KW-0444">Lipid biosynthesis</keyword>
<keyword id="KW-0443">Lipid metabolism</keyword>
<keyword id="KW-0594">Phospholipid biosynthesis</keyword>
<keyword id="KW-1208">Phospholipid metabolism</keyword>
<keyword id="KW-0808">Transferase</keyword>
<reference key="1">
    <citation type="journal article" date="2007" name="ISME J.">
        <title>Population level functional diversity in a microbial community revealed by comparative genomic and metagenomic analyses.</title>
        <authorList>
            <person name="Bhaya D."/>
            <person name="Grossman A.R."/>
            <person name="Steunou A.-S."/>
            <person name="Khuri N."/>
            <person name="Cohan F.M."/>
            <person name="Hamamura N."/>
            <person name="Melendrez M.C."/>
            <person name="Bateson M.M."/>
            <person name="Ward D.M."/>
            <person name="Heidelberg J.F."/>
        </authorList>
    </citation>
    <scope>NUCLEOTIDE SEQUENCE [LARGE SCALE GENOMIC DNA]</scope>
    <source>
        <strain>JA-3-3Ab</strain>
    </source>
</reference>
<feature type="chain" id="PRO_0000329274" description="Phosphate acyltransferase">
    <location>
        <begin position="1"/>
        <end position="363"/>
    </location>
</feature>
<feature type="region of interest" description="Disordered" evidence="2">
    <location>
        <begin position="326"/>
        <end position="363"/>
    </location>
</feature>
<feature type="compositionally biased region" description="Low complexity" evidence="2">
    <location>
        <begin position="337"/>
        <end position="354"/>
    </location>
</feature>
<evidence type="ECO:0000255" key="1">
    <source>
        <dbReference type="HAMAP-Rule" id="MF_00019"/>
    </source>
</evidence>
<evidence type="ECO:0000256" key="2">
    <source>
        <dbReference type="SAM" id="MobiDB-lite"/>
    </source>
</evidence>
<dbReference type="EC" id="2.3.1.274" evidence="1"/>
<dbReference type="EMBL" id="CP000239">
    <property type="protein sequence ID" value="ABD00493.1"/>
    <property type="molecule type" value="Genomic_DNA"/>
</dbReference>
<dbReference type="RefSeq" id="WP_011431166.1">
    <property type="nucleotide sequence ID" value="NC_007775.1"/>
</dbReference>
<dbReference type="SMR" id="Q2JS89"/>
<dbReference type="STRING" id="321327.CYA_2367"/>
<dbReference type="KEGG" id="cya:CYA_2367"/>
<dbReference type="eggNOG" id="COG0416">
    <property type="taxonomic scope" value="Bacteria"/>
</dbReference>
<dbReference type="HOGENOM" id="CLU_039379_1_1_3"/>
<dbReference type="OrthoDB" id="9806408at2"/>
<dbReference type="UniPathway" id="UPA00085"/>
<dbReference type="Proteomes" id="UP000008818">
    <property type="component" value="Chromosome"/>
</dbReference>
<dbReference type="GO" id="GO:0005737">
    <property type="term" value="C:cytoplasm"/>
    <property type="evidence" value="ECO:0007669"/>
    <property type="project" value="UniProtKB-SubCell"/>
</dbReference>
<dbReference type="GO" id="GO:0043811">
    <property type="term" value="F:phosphate:acyl-[acyl carrier protein] acyltransferase activity"/>
    <property type="evidence" value="ECO:0007669"/>
    <property type="project" value="UniProtKB-UniRule"/>
</dbReference>
<dbReference type="GO" id="GO:0006633">
    <property type="term" value="P:fatty acid biosynthetic process"/>
    <property type="evidence" value="ECO:0007669"/>
    <property type="project" value="UniProtKB-UniRule"/>
</dbReference>
<dbReference type="GO" id="GO:0008654">
    <property type="term" value="P:phospholipid biosynthetic process"/>
    <property type="evidence" value="ECO:0007669"/>
    <property type="project" value="UniProtKB-KW"/>
</dbReference>
<dbReference type="Gene3D" id="3.40.718.10">
    <property type="entry name" value="Isopropylmalate Dehydrogenase"/>
    <property type="match status" value="1"/>
</dbReference>
<dbReference type="HAMAP" id="MF_00019">
    <property type="entry name" value="PlsX"/>
    <property type="match status" value="1"/>
</dbReference>
<dbReference type="InterPro" id="IPR003664">
    <property type="entry name" value="FA_synthesis"/>
</dbReference>
<dbReference type="InterPro" id="IPR012281">
    <property type="entry name" value="Phospholipid_synth_PlsX-like"/>
</dbReference>
<dbReference type="NCBIfam" id="TIGR00182">
    <property type="entry name" value="plsX"/>
    <property type="match status" value="1"/>
</dbReference>
<dbReference type="PANTHER" id="PTHR30100">
    <property type="entry name" value="FATTY ACID/PHOSPHOLIPID SYNTHESIS PROTEIN PLSX"/>
    <property type="match status" value="1"/>
</dbReference>
<dbReference type="PANTHER" id="PTHR30100:SF1">
    <property type="entry name" value="PHOSPHATE ACYLTRANSFERASE"/>
    <property type="match status" value="1"/>
</dbReference>
<dbReference type="Pfam" id="PF02504">
    <property type="entry name" value="FA_synthesis"/>
    <property type="match status" value="1"/>
</dbReference>
<dbReference type="PIRSF" id="PIRSF002465">
    <property type="entry name" value="Phsphlp_syn_PlsX"/>
    <property type="match status" value="1"/>
</dbReference>
<dbReference type="SUPFAM" id="SSF53659">
    <property type="entry name" value="Isocitrate/Isopropylmalate dehydrogenase-like"/>
    <property type="match status" value="1"/>
</dbReference>
<name>PLSX_SYNJA</name>
<proteinExistence type="inferred from homology"/>
<comment type="function">
    <text evidence="1">Catalyzes the reversible formation of acyl-phosphate (acyl-PO(4)) from acyl-[acyl-carrier-protein] (acyl-ACP). This enzyme utilizes acyl-ACP as fatty acyl donor, but not acyl-CoA.</text>
</comment>
<comment type="catalytic activity">
    <reaction evidence="1">
        <text>a fatty acyl-[ACP] + phosphate = an acyl phosphate + holo-[ACP]</text>
        <dbReference type="Rhea" id="RHEA:42292"/>
        <dbReference type="Rhea" id="RHEA-COMP:9685"/>
        <dbReference type="Rhea" id="RHEA-COMP:14125"/>
        <dbReference type="ChEBI" id="CHEBI:43474"/>
        <dbReference type="ChEBI" id="CHEBI:59918"/>
        <dbReference type="ChEBI" id="CHEBI:64479"/>
        <dbReference type="ChEBI" id="CHEBI:138651"/>
        <dbReference type="EC" id="2.3.1.274"/>
    </reaction>
</comment>
<comment type="pathway">
    <text evidence="1">Lipid metabolism; phospholipid metabolism.</text>
</comment>
<comment type="subunit">
    <text evidence="1">Homodimer. Probably interacts with PlsY.</text>
</comment>
<comment type="subcellular location">
    <subcellularLocation>
        <location evidence="1">Cytoplasm</location>
    </subcellularLocation>
    <text evidence="1">Associated with the membrane possibly through PlsY.</text>
</comment>
<comment type="similarity">
    <text evidence="1">Belongs to the PlsX family.</text>
</comment>
<gene>
    <name evidence="1" type="primary">plsX</name>
    <name type="ordered locus">CYA_2367</name>
</gene>